<keyword id="KW-0066">ATP synthesis</keyword>
<keyword id="KW-0138">CF(0)</keyword>
<keyword id="KW-0150">Chloroplast</keyword>
<keyword id="KW-0375">Hydrogen ion transport</keyword>
<keyword id="KW-0406">Ion transport</keyword>
<keyword id="KW-0472">Membrane</keyword>
<keyword id="KW-0934">Plastid</keyword>
<keyword id="KW-0793">Thylakoid</keyword>
<keyword id="KW-0812">Transmembrane</keyword>
<keyword id="KW-1133">Transmembrane helix</keyword>
<keyword id="KW-0813">Transport</keyword>
<name>ATPI_MARPO</name>
<comment type="function">
    <text evidence="1">Key component of the proton channel; it plays a direct role in the translocation of protons across the membrane.</text>
</comment>
<comment type="subunit">
    <text evidence="1">F-type ATPases have 2 components, CF(1) - the catalytic core - and CF(0) - the membrane proton channel. CF(1) has five subunits: alpha(3), beta(3), gamma(1), delta(1), epsilon(1). CF(0) has four main subunits: a, b, b' and c.</text>
</comment>
<comment type="subcellular location">
    <subcellularLocation>
        <location evidence="1">Plastid</location>
        <location evidence="1">Chloroplast thylakoid membrane</location>
        <topology evidence="1">Multi-pass membrane protein</topology>
    </subcellularLocation>
</comment>
<comment type="similarity">
    <text evidence="1">Belongs to the ATPase A chain family.</text>
</comment>
<geneLocation type="chloroplast"/>
<sequence>MSHTAKMASTFNNFYEISNVEVGQHFYWQLGSFQVHAQVLITSWIVIAILLSLAVLATRNLQTIPMGGQNFVEYVLEFIRDLTRTQIGEEEYRPWVPFIGTMFLFIFVSNWSGALFPWRVFELPNGELAAPTNDINTTVALALLTSVAYFYAGLHKKGLSYFGKYIQPTPVLLPINILEDFTKPLSLSFRLFGNILADELVVAVLISLVPLVVPIPMMFLGLFTSAIQALIFATLAAAYIGESMEGHH</sequence>
<gene>
    <name evidence="1" type="primary">atpI</name>
</gene>
<dbReference type="EMBL" id="X04465">
    <property type="protein sequence ID" value="CAA28065.1"/>
    <property type="molecule type" value="Genomic_DNA"/>
</dbReference>
<dbReference type="PIR" id="A01058">
    <property type="entry name" value="LWLV6"/>
</dbReference>
<dbReference type="RefSeq" id="NP_039279.1">
    <property type="nucleotide sequence ID" value="NC_001319.1"/>
</dbReference>
<dbReference type="SMR" id="P06289"/>
<dbReference type="GeneID" id="2702537"/>
<dbReference type="GO" id="GO:0009535">
    <property type="term" value="C:chloroplast thylakoid membrane"/>
    <property type="evidence" value="ECO:0007669"/>
    <property type="project" value="UniProtKB-SubCell"/>
</dbReference>
<dbReference type="GO" id="GO:0005886">
    <property type="term" value="C:plasma membrane"/>
    <property type="evidence" value="ECO:0007669"/>
    <property type="project" value="UniProtKB-UniRule"/>
</dbReference>
<dbReference type="GO" id="GO:0045259">
    <property type="term" value="C:proton-transporting ATP synthase complex"/>
    <property type="evidence" value="ECO:0007669"/>
    <property type="project" value="UniProtKB-KW"/>
</dbReference>
<dbReference type="GO" id="GO:0046933">
    <property type="term" value="F:proton-transporting ATP synthase activity, rotational mechanism"/>
    <property type="evidence" value="ECO:0007669"/>
    <property type="project" value="UniProtKB-UniRule"/>
</dbReference>
<dbReference type="CDD" id="cd00310">
    <property type="entry name" value="ATP-synt_Fo_a_6"/>
    <property type="match status" value="1"/>
</dbReference>
<dbReference type="FunFam" id="1.20.120.220:FF:000001">
    <property type="entry name" value="ATP synthase subunit a, chloroplastic"/>
    <property type="match status" value="1"/>
</dbReference>
<dbReference type="Gene3D" id="1.20.120.220">
    <property type="entry name" value="ATP synthase, F0 complex, subunit A"/>
    <property type="match status" value="1"/>
</dbReference>
<dbReference type="HAMAP" id="MF_01393">
    <property type="entry name" value="ATP_synth_a_bact"/>
    <property type="match status" value="1"/>
</dbReference>
<dbReference type="InterPro" id="IPR045082">
    <property type="entry name" value="ATP_syn_F0_a_bact/chloroplast"/>
</dbReference>
<dbReference type="InterPro" id="IPR000568">
    <property type="entry name" value="ATP_synth_F0_asu"/>
</dbReference>
<dbReference type="InterPro" id="IPR023011">
    <property type="entry name" value="ATP_synth_F0_asu_AS"/>
</dbReference>
<dbReference type="InterPro" id="IPR035908">
    <property type="entry name" value="F0_ATP_A_sf"/>
</dbReference>
<dbReference type="NCBIfam" id="TIGR01131">
    <property type="entry name" value="ATP_synt_6_or_A"/>
    <property type="match status" value="1"/>
</dbReference>
<dbReference type="PANTHER" id="PTHR42823">
    <property type="entry name" value="ATP SYNTHASE SUBUNIT A, CHLOROPLASTIC"/>
    <property type="match status" value="1"/>
</dbReference>
<dbReference type="PANTHER" id="PTHR42823:SF3">
    <property type="entry name" value="ATP SYNTHASE SUBUNIT A, CHLOROPLASTIC"/>
    <property type="match status" value="1"/>
</dbReference>
<dbReference type="Pfam" id="PF00119">
    <property type="entry name" value="ATP-synt_A"/>
    <property type="match status" value="1"/>
</dbReference>
<dbReference type="PRINTS" id="PR00123">
    <property type="entry name" value="ATPASEA"/>
</dbReference>
<dbReference type="SUPFAM" id="SSF81336">
    <property type="entry name" value="F1F0 ATP synthase subunit A"/>
    <property type="match status" value="1"/>
</dbReference>
<dbReference type="PROSITE" id="PS00449">
    <property type="entry name" value="ATPASE_A"/>
    <property type="match status" value="1"/>
</dbReference>
<feature type="chain" id="PRO_0000002588" description="ATP synthase subunit a, chloroplastic">
    <location>
        <begin position="1"/>
        <end position="248"/>
    </location>
</feature>
<feature type="transmembrane region" description="Helical" evidence="1">
    <location>
        <begin position="37"/>
        <end position="57"/>
    </location>
</feature>
<feature type="transmembrane region" description="Helical" evidence="1">
    <location>
        <begin position="96"/>
        <end position="116"/>
    </location>
</feature>
<feature type="transmembrane region" description="Helical" evidence="1">
    <location>
        <begin position="135"/>
        <end position="155"/>
    </location>
</feature>
<feature type="transmembrane region" description="Helical" evidence="1">
    <location>
        <begin position="200"/>
        <end position="220"/>
    </location>
</feature>
<feature type="transmembrane region" description="Helical" evidence="1">
    <location>
        <begin position="221"/>
        <end position="241"/>
    </location>
</feature>
<organism>
    <name type="scientific">Marchantia polymorpha</name>
    <name type="common">Common liverwort</name>
    <name type="synonym">Marchantia aquatica</name>
    <dbReference type="NCBI Taxonomy" id="3197"/>
    <lineage>
        <taxon>Eukaryota</taxon>
        <taxon>Viridiplantae</taxon>
        <taxon>Streptophyta</taxon>
        <taxon>Embryophyta</taxon>
        <taxon>Marchantiophyta</taxon>
        <taxon>Marchantiopsida</taxon>
        <taxon>Marchantiidae</taxon>
        <taxon>Marchantiales</taxon>
        <taxon>Marchantiaceae</taxon>
        <taxon>Marchantia</taxon>
    </lineage>
</organism>
<protein>
    <recommendedName>
        <fullName evidence="1">ATP synthase subunit a, chloroplastic</fullName>
    </recommendedName>
    <alternativeName>
        <fullName evidence="1">ATP synthase F0 sector subunit a</fullName>
    </alternativeName>
    <alternativeName>
        <fullName evidence="1">F-ATPase subunit IV</fullName>
    </alternativeName>
</protein>
<accession>P06289</accession>
<reference key="1">
    <citation type="journal article" date="1986" name="Nature">
        <title>Chloroplast gene organization deduced from complete sequence of liverwort Marchantia polymorpha chloroplast DNA.</title>
        <authorList>
            <person name="Ohyama K."/>
            <person name="Fukuzawa H."/>
            <person name="Kohchi T."/>
            <person name="Shirai H."/>
            <person name="Sano T."/>
            <person name="Sano S."/>
            <person name="Umesono K."/>
            <person name="Shiki Y."/>
            <person name="Takeuchi M."/>
            <person name="Chang Z."/>
            <person name="Aota S."/>
            <person name="Inokuchi H."/>
            <person name="Ozeki H."/>
        </authorList>
    </citation>
    <scope>NUCLEOTIDE SEQUENCE [LARGE SCALE GENOMIC DNA]</scope>
</reference>
<reference key="2">
    <citation type="journal article" date="1988" name="J. Mol. Biol.">
        <title>Structure and organization of Marchantia polymorpha chloroplast genome. II. Gene organization of the large single copy region from rps'12 to atpB.</title>
        <authorList>
            <person name="Umesono K."/>
            <person name="Inokuchi H."/>
            <person name="Shiki Y."/>
            <person name="Takeuchi M."/>
            <person name="Chang Z."/>
            <person name="Fukuzawa H."/>
            <person name="Kohchi T."/>
            <person name="Shirai H."/>
            <person name="Ohyama K."/>
            <person name="Ozeki H."/>
        </authorList>
    </citation>
    <scope>NUCLEOTIDE SEQUENCE [GENOMIC DNA]</scope>
</reference>
<proteinExistence type="inferred from homology"/>
<evidence type="ECO:0000255" key="1">
    <source>
        <dbReference type="HAMAP-Rule" id="MF_01393"/>
    </source>
</evidence>